<evidence type="ECO:0000255" key="1">
    <source>
        <dbReference type="HAMAP-Rule" id="MF_00170"/>
    </source>
</evidence>
<dbReference type="EC" id="5.3.1.6" evidence="1"/>
<dbReference type="EMBL" id="CP000627">
    <property type="protein sequence ID" value="ABQ21429.1"/>
    <property type="molecule type" value="Genomic_DNA"/>
</dbReference>
<dbReference type="EMBL" id="CP001235">
    <property type="protein sequence ID" value="ACP10581.1"/>
    <property type="molecule type" value="Genomic_DNA"/>
</dbReference>
<dbReference type="RefSeq" id="WP_000189749.1">
    <property type="nucleotide sequence ID" value="NZ_JAACZH010000010.1"/>
</dbReference>
<dbReference type="SMR" id="A5F5G0"/>
<dbReference type="GeneID" id="88783289"/>
<dbReference type="KEGG" id="vco:VC0395_A2056"/>
<dbReference type="KEGG" id="vcr:VC395_2594"/>
<dbReference type="PATRIC" id="fig|345073.21.peg.2498"/>
<dbReference type="eggNOG" id="COG0120">
    <property type="taxonomic scope" value="Bacteria"/>
</dbReference>
<dbReference type="HOGENOM" id="CLU_056590_1_1_6"/>
<dbReference type="OrthoDB" id="5870696at2"/>
<dbReference type="UniPathway" id="UPA00115">
    <property type="reaction ID" value="UER00412"/>
</dbReference>
<dbReference type="Proteomes" id="UP000000249">
    <property type="component" value="Chromosome 2"/>
</dbReference>
<dbReference type="GO" id="GO:0005829">
    <property type="term" value="C:cytosol"/>
    <property type="evidence" value="ECO:0007669"/>
    <property type="project" value="TreeGrafter"/>
</dbReference>
<dbReference type="GO" id="GO:0004751">
    <property type="term" value="F:ribose-5-phosphate isomerase activity"/>
    <property type="evidence" value="ECO:0007669"/>
    <property type="project" value="UniProtKB-UniRule"/>
</dbReference>
<dbReference type="GO" id="GO:0006014">
    <property type="term" value="P:D-ribose metabolic process"/>
    <property type="evidence" value="ECO:0007669"/>
    <property type="project" value="TreeGrafter"/>
</dbReference>
<dbReference type="GO" id="GO:0009052">
    <property type="term" value="P:pentose-phosphate shunt, non-oxidative branch"/>
    <property type="evidence" value="ECO:0007669"/>
    <property type="project" value="UniProtKB-UniRule"/>
</dbReference>
<dbReference type="CDD" id="cd01398">
    <property type="entry name" value="RPI_A"/>
    <property type="match status" value="1"/>
</dbReference>
<dbReference type="FunFam" id="3.30.70.260:FF:000004">
    <property type="entry name" value="Ribose-5-phosphate isomerase A"/>
    <property type="match status" value="1"/>
</dbReference>
<dbReference type="FunFam" id="3.40.50.1360:FF:000001">
    <property type="entry name" value="Ribose-5-phosphate isomerase A"/>
    <property type="match status" value="1"/>
</dbReference>
<dbReference type="Gene3D" id="3.30.70.260">
    <property type="match status" value="1"/>
</dbReference>
<dbReference type="Gene3D" id="3.40.50.1360">
    <property type="match status" value="1"/>
</dbReference>
<dbReference type="HAMAP" id="MF_00170">
    <property type="entry name" value="Rib_5P_isom_A"/>
    <property type="match status" value="1"/>
</dbReference>
<dbReference type="InterPro" id="IPR037171">
    <property type="entry name" value="NagB/RpiA_transferase-like"/>
</dbReference>
<dbReference type="InterPro" id="IPR020672">
    <property type="entry name" value="Ribose5P_isomerase_typA_subgr"/>
</dbReference>
<dbReference type="InterPro" id="IPR004788">
    <property type="entry name" value="Ribose5P_isomerase_type_A"/>
</dbReference>
<dbReference type="NCBIfam" id="NF001924">
    <property type="entry name" value="PRK00702.1"/>
    <property type="match status" value="1"/>
</dbReference>
<dbReference type="NCBIfam" id="TIGR00021">
    <property type="entry name" value="rpiA"/>
    <property type="match status" value="1"/>
</dbReference>
<dbReference type="PANTHER" id="PTHR11934">
    <property type="entry name" value="RIBOSE-5-PHOSPHATE ISOMERASE"/>
    <property type="match status" value="1"/>
</dbReference>
<dbReference type="PANTHER" id="PTHR11934:SF0">
    <property type="entry name" value="RIBOSE-5-PHOSPHATE ISOMERASE"/>
    <property type="match status" value="1"/>
</dbReference>
<dbReference type="Pfam" id="PF06026">
    <property type="entry name" value="Rib_5-P_isom_A"/>
    <property type="match status" value="1"/>
</dbReference>
<dbReference type="SUPFAM" id="SSF75445">
    <property type="entry name" value="D-ribose-5-phosphate isomerase (RpiA), lid domain"/>
    <property type="match status" value="1"/>
</dbReference>
<dbReference type="SUPFAM" id="SSF100950">
    <property type="entry name" value="NagB/RpiA/CoA transferase-like"/>
    <property type="match status" value="1"/>
</dbReference>
<name>RPIA_VIBC3</name>
<reference key="1">
    <citation type="submission" date="2007-03" db="EMBL/GenBank/DDBJ databases">
        <authorList>
            <person name="Heidelberg J."/>
        </authorList>
    </citation>
    <scope>NUCLEOTIDE SEQUENCE [LARGE SCALE GENOMIC DNA]</scope>
    <source>
        <strain>ATCC 39541 / Classical Ogawa 395 / O395</strain>
    </source>
</reference>
<reference key="2">
    <citation type="journal article" date="2008" name="PLoS ONE">
        <title>A recalibrated molecular clock and independent origins for the cholera pandemic clones.</title>
        <authorList>
            <person name="Feng L."/>
            <person name="Reeves P.R."/>
            <person name="Lan R."/>
            <person name="Ren Y."/>
            <person name="Gao C."/>
            <person name="Zhou Z."/>
            <person name="Ren Y."/>
            <person name="Cheng J."/>
            <person name="Wang W."/>
            <person name="Wang J."/>
            <person name="Qian W."/>
            <person name="Li D."/>
            <person name="Wang L."/>
        </authorList>
    </citation>
    <scope>NUCLEOTIDE SEQUENCE [LARGE SCALE GENOMIC DNA]</scope>
    <source>
        <strain>ATCC 39541 / Classical Ogawa 395 / O395</strain>
    </source>
</reference>
<protein>
    <recommendedName>
        <fullName evidence="1">Ribose-5-phosphate isomerase A</fullName>
        <ecNumber evidence="1">5.3.1.6</ecNumber>
    </recommendedName>
    <alternativeName>
        <fullName evidence="1">Phosphoriboisomerase A</fullName>
        <shortName evidence="1">PRI</shortName>
    </alternativeName>
</protein>
<gene>
    <name evidence="1" type="primary">rpiA</name>
    <name type="ordered locus">VC0395_A2056</name>
    <name type="ordered locus">VC395_2594</name>
</gene>
<sequence length="218" mass="23058">MTQDEMKKAAGWAALKYVEKGSIVGVGTGSTVNHFIDALGTIKDEIKGAVSSSIASTAKLEALGIRVYDCNDVSELDIYVDGADEINPERDMIKGGGAALTREKIVAAIAKKFVCIVDGTKAVDVLGNFPLPVEVIPMARSYVARELVKLGGDPVYREGVITDNGNVILDVYNMKITHPKDLESKINGIAGVVTVGLFAHRGADVVITGTPQGAKIEE</sequence>
<organism>
    <name type="scientific">Vibrio cholerae serotype O1 (strain ATCC 39541 / Classical Ogawa 395 / O395)</name>
    <dbReference type="NCBI Taxonomy" id="345073"/>
    <lineage>
        <taxon>Bacteria</taxon>
        <taxon>Pseudomonadati</taxon>
        <taxon>Pseudomonadota</taxon>
        <taxon>Gammaproteobacteria</taxon>
        <taxon>Vibrionales</taxon>
        <taxon>Vibrionaceae</taxon>
        <taxon>Vibrio</taxon>
    </lineage>
</organism>
<proteinExistence type="inferred from homology"/>
<keyword id="KW-0413">Isomerase</keyword>
<comment type="function">
    <text evidence="1">Catalyzes the reversible conversion of ribose-5-phosphate to ribulose 5-phosphate.</text>
</comment>
<comment type="catalytic activity">
    <reaction evidence="1">
        <text>aldehydo-D-ribose 5-phosphate = D-ribulose 5-phosphate</text>
        <dbReference type="Rhea" id="RHEA:14657"/>
        <dbReference type="ChEBI" id="CHEBI:58121"/>
        <dbReference type="ChEBI" id="CHEBI:58273"/>
        <dbReference type="EC" id="5.3.1.6"/>
    </reaction>
</comment>
<comment type="pathway">
    <text evidence="1">Carbohydrate degradation; pentose phosphate pathway; D-ribose 5-phosphate from D-ribulose 5-phosphate (non-oxidative stage): step 1/1.</text>
</comment>
<comment type="subunit">
    <text evidence="1">Homodimer.</text>
</comment>
<comment type="similarity">
    <text evidence="1">Belongs to the ribose 5-phosphate isomerase family.</text>
</comment>
<accession>A5F5G0</accession>
<accession>C3M4X0</accession>
<feature type="chain" id="PRO_1000071588" description="Ribose-5-phosphate isomerase A">
    <location>
        <begin position="1"/>
        <end position="218"/>
    </location>
</feature>
<feature type="active site" description="Proton acceptor" evidence="1">
    <location>
        <position position="103"/>
    </location>
</feature>
<feature type="binding site" evidence="1">
    <location>
        <begin position="28"/>
        <end position="31"/>
    </location>
    <ligand>
        <name>substrate</name>
    </ligand>
</feature>
<feature type="binding site" evidence="1">
    <location>
        <begin position="81"/>
        <end position="84"/>
    </location>
    <ligand>
        <name>substrate</name>
    </ligand>
</feature>
<feature type="binding site" evidence="1">
    <location>
        <begin position="94"/>
        <end position="97"/>
    </location>
    <ligand>
        <name>substrate</name>
    </ligand>
</feature>
<feature type="binding site" evidence="1">
    <location>
        <position position="121"/>
    </location>
    <ligand>
        <name>substrate</name>
    </ligand>
</feature>